<sequence length="534" mass="60627">MFSWVSKDARRKKEPELFQTVAEGLRQLYAQKLLPLEEHYRFHEFHSPALEDADFDNKPMVLLVGQYSTGKTTFIRHLIEQDFPGMRIGPEPTTDSFIAVMHGPTEGVVPGNALVVDPRRPFRKLNAFGNAFLNRFMCAQLPNPVLDSISIIDTPGILSGEKQRISRGYDFAAVLEWFAERVDRIILLFDAHKLDISDEFSEVIKALKNHEDKIRVVLNKADQIETQQLMRVYGALMWSLGKIINTPEVVRVYIGSFWSHPLLIPDNRKLFEAEEQDLFKDIQSLPRNAALRKLNDLIKRARLAKVHAYIISSLKKEMPNVFGKESKKKELVNNLGEIYQKIEREHQISPGDFPSLRKMQELLQTQDFSKFQALKPKLLDTVDDMLANDIARLMVMVRQEESLMPSQVVKGGAFDGTMNGPFGHGYGEGAGEGIDDVEWVVGKDKPTYDEIFYTLSPVNGKITGANAKKEMVKSKLPNTVLGKIWKLADVDKDGLLDDEEFALANHLIKVKLEGHELPADLPPHLVPPSKRRHE</sequence>
<keyword id="KW-0007">Acetylation</keyword>
<keyword id="KW-0067">ATP-binding</keyword>
<keyword id="KW-0106">Calcium</keyword>
<keyword id="KW-1003">Cell membrane</keyword>
<keyword id="KW-0966">Cell projection</keyword>
<keyword id="KW-0969">Cilium</keyword>
<keyword id="KW-0970">Cilium biogenesis/degradation</keyword>
<keyword id="KW-0175">Coiled coil</keyword>
<keyword id="KW-0967">Endosome</keyword>
<keyword id="KW-0472">Membrane</keyword>
<keyword id="KW-0479">Metal-binding</keyword>
<keyword id="KW-0547">Nucleotide-binding</keyword>
<keyword id="KW-0597">Phosphoprotein</keyword>
<keyword id="KW-0653">Protein transport</keyword>
<keyword id="KW-1185">Reference proteome</keyword>
<keyword id="KW-0813">Transport</keyword>
<comment type="function">
    <text evidence="1 3 4">ATP- and membrane-binding protein that controls membrane reorganization/tubulation upon ATP hydrolysis. Acts in early endocytic membrane fusion and membrane trafficking of recycling endosomes. Recruited to endosomal membranes upon nerve growth factor stimulation, indirectly regulates neurite outgrowth. Plays a role in myoblast fusion. Involved in the unidirectional retrograde dendritic transport of endocytosed BACE1 and in efficient sorting of BACE1 to axons implicating a function in neuronal APP processing. Plays a role in the formation of the ciliary vesicle (CV), an early step in cilium biogenesis. Proposed to be required for the fusion of distal appendage vesicles (DAVs) to form the CV by recruiting SNARE complex component SNAP29. Is required for recruitment of transition zone proteins CEP290, RPGRIP1L, TMEM67 and B9D2, and of IFT20 following DAV reorganization before Rab8-dependent ciliary membrane extension. Required for the loss of CCP110 form the mother centriole essential for the maturation of the basal body during ciliogenesis.</text>
</comment>
<comment type="subunit">
    <text evidence="3 4">Homooligomer, and heterooligomer with EHD2, EHD3 and EHD4, ATP-binding is required for heterooligomerization. Interacts (via EH domain) with MICALL1 (via NPF1 motif); the interaction is direct and recruits EHD1 to membranes. Interacts with RAB35; the interaction is indirect through MICALL1 and recruits EHD1 to membranes. Interacts (via EH domain) with PACSIN2 (via NPF motifs); regulates localization to tubular recycling endosome membranes. Interacts with PACSIN1. Interacts with RAB8A. Interacts with FER1L5 (via second C2 domain). Interacts with MYOF. Interacts with ZFYVE20. Interacts (via EH domain) with RAB11FIP2.</text>
</comment>
<comment type="subcellular location">
    <subcellularLocation>
        <location evidence="3">Recycling endosome membrane</location>
        <topology evidence="9">Peripheral membrane protein</topology>
        <orientation evidence="9">Cytoplasmic side</orientation>
    </subcellularLocation>
    <subcellularLocation>
        <location evidence="3">Early endosome membrane</location>
        <topology evidence="9">Peripheral membrane protein</topology>
        <orientation evidence="9">Cytoplasmic side</orientation>
    </subcellularLocation>
    <subcellularLocation>
        <location evidence="3">Cell membrane</location>
        <topology evidence="9">Peripheral membrane protein</topology>
        <orientation evidence="9">Cytoplasmic side</orientation>
    </subcellularLocation>
    <subcellularLocation>
        <location evidence="3">Cell projection</location>
        <location evidence="3">Cilium membrane</location>
        <topology evidence="9">Peripheral membrane protein</topology>
        <orientation evidence="9">Cytoplasmic side</orientation>
    </subcellularLocation>
    <text evidence="3 4">Preferentially associates with tubular recycling endosomes (By similarity). Colocalizes with FER1L5 at plasma membrane in myoblasts and myotubes (By similarity). Localizes to the ciliary pocket from where the cilium protrudes (By similarity). Colocalizes with BACE1 in tubulovesicular cytoplasmic membranes. Colocalizes with BACE1 and APP amyloid beta proteins in hippocampal mossy fiber terminals (By similarity).</text>
</comment>
<comment type="domain">
    <text evidence="4">The EH domain interacts with Asn-Pro-Phe (NPF) motifs of target proteins.</text>
</comment>
<comment type="similarity">
    <text evidence="8">Belongs to the TRAFAC class dynamin-like GTPase superfamily. Dynamin/Fzo/YdjA family. EHD subfamily.</text>
</comment>
<protein>
    <recommendedName>
        <fullName evidence="9">EH domain-containing protein 1</fullName>
    </recommendedName>
</protein>
<evidence type="ECO:0000250" key="1">
    <source>
        <dbReference type="UniProtKB" id="Q641Z6"/>
    </source>
</evidence>
<evidence type="ECO:0000250" key="2">
    <source>
        <dbReference type="UniProtKB" id="Q8BH64"/>
    </source>
</evidence>
<evidence type="ECO:0000250" key="3">
    <source>
        <dbReference type="UniProtKB" id="Q9H4M9"/>
    </source>
</evidence>
<evidence type="ECO:0000250" key="4">
    <source>
        <dbReference type="UniProtKB" id="Q9WVK4"/>
    </source>
</evidence>
<evidence type="ECO:0000255" key="5"/>
<evidence type="ECO:0000255" key="6">
    <source>
        <dbReference type="PROSITE-ProRule" id="PRU00077"/>
    </source>
</evidence>
<evidence type="ECO:0000255" key="7">
    <source>
        <dbReference type="PROSITE-ProRule" id="PRU00448"/>
    </source>
</evidence>
<evidence type="ECO:0000255" key="8">
    <source>
        <dbReference type="PROSITE-ProRule" id="PRU01055"/>
    </source>
</evidence>
<evidence type="ECO:0000305" key="9"/>
<dbReference type="EMBL" id="CR858594">
    <property type="protein sequence ID" value="CAH90816.1"/>
    <property type="molecule type" value="mRNA"/>
</dbReference>
<dbReference type="RefSeq" id="NP_001125465.1">
    <property type="nucleotide sequence ID" value="NM_001131993.1"/>
</dbReference>
<dbReference type="BMRB" id="Q5RBP4"/>
<dbReference type="SMR" id="Q5RBP4"/>
<dbReference type="FunCoup" id="Q5RBP4">
    <property type="interactions" value="1705"/>
</dbReference>
<dbReference type="STRING" id="9601.ENSPPYP00000003578"/>
<dbReference type="Ensembl" id="ENSPPYT00000003705.3">
    <property type="protein sequence ID" value="ENSPPYP00000003578.2"/>
    <property type="gene ID" value="ENSPPYG00000003093.3"/>
</dbReference>
<dbReference type="GeneID" id="100172373"/>
<dbReference type="KEGG" id="pon:100172373"/>
<dbReference type="CTD" id="10938"/>
<dbReference type="eggNOG" id="KOG1954">
    <property type="taxonomic scope" value="Eukaryota"/>
</dbReference>
<dbReference type="GeneTree" id="ENSGT00940000158249"/>
<dbReference type="HOGENOM" id="CLU_017595_1_1_1"/>
<dbReference type="InParanoid" id="Q5RBP4"/>
<dbReference type="OrthoDB" id="1716625at2759"/>
<dbReference type="TreeFam" id="TF314429"/>
<dbReference type="Proteomes" id="UP000001595">
    <property type="component" value="Chromosome 11"/>
</dbReference>
<dbReference type="GO" id="GO:0020018">
    <property type="term" value="C:ciliary pocket membrane"/>
    <property type="evidence" value="ECO:0000250"/>
    <property type="project" value="UniProtKB"/>
</dbReference>
<dbReference type="GO" id="GO:0005929">
    <property type="term" value="C:cilium"/>
    <property type="evidence" value="ECO:0000250"/>
    <property type="project" value="UniProtKB"/>
</dbReference>
<dbReference type="GO" id="GO:0031901">
    <property type="term" value="C:early endosome membrane"/>
    <property type="evidence" value="ECO:0000250"/>
    <property type="project" value="UniProtKB"/>
</dbReference>
<dbReference type="GO" id="GO:0010008">
    <property type="term" value="C:endosome membrane"/>
    <property type="evidence" value="ECO:0000250"/>
    <property type="project" value="UniProtKB"/>
</dbReference>
<dbReference type="GO" id="GO:0005886">
    <property type="term" value="C:plasma membrane"/>
    <property type="evidence" value="ECO:0000250"/>
    <property type="project" value="UniProtKB"/>
</dbReference>
<dbReference type="GO" id="GO:0055038">
    <property type="term" value="C:recycling endosome membrane"/>
    <property type="evidence" value="ECO:0000250"/>
    <property type="project" value="UniProtKB"/>
</dbReference>
<dbReference type="GO" id="GO:0005524">
    <property type="term" value="F:ATP binding"/>
    <property type="evidence" value="ECO:0007669"/>
    <property type="project" value="UniProtKB-KW"/>
</dbReference>
<dbReference type="GO" id="GO:0005509">
    <property type="term" value="F:calcium ion binding"/>
    <property type="evidence" value="ECO:0007669"/>
    <property type="project" value="InterPro"/>
</dbReference>
<dbReference type="GO" id="GO:0005525">
    <property type="term" value="F:GTP binding"/>
    <property type="evidence" value="ECO:0007669"/>
    <property type="project" value="InterPro"/>
</dbReference>
<dbReference type="GO" id="GO:1990090">
    <property type="term" value="P:cellular response to nerve growth factor stimulus"/>
    <property type="evidence" value="ECO:0000250"/>
    <property type="project" value="UniProtKB"/>
</dbReference>
<dbReference type="GO" id="GO:0060271">
    <property type="term" value="P:cilium assembly"/>
    <property type="evidence" value="ECO:0000250"/>
    <property type="project" value="UniProtKB"/>
</dbReference>
<dbReference type="GO" id="GO:0032456">
    <property type="term" value="P:endocytic recycling"/>
    <property type="evidence" value="ECO:0000250"/>
    <property type="project" value="UniProtKB"/>
</dbReference>
<dbReference type="GO" id="GO:0006897">
    <property type="term" value="P:endocytosis"/>
    <property type="evidence" value="ECO:0000250"/>
    <property type="project" value="UniProtKB"/>
</dbReference>
<dbReference type="GO" id="GO:0006886">
    <property type="term" value="P:intracellular protein transport"/>
    <property type="evidence" value="ECO:0000250"/>
    <property type="project" value="UniProtKB"/>
</dbReference>
<dbReference type="GO" id="GO:0031175">
    <property type="term" value="P:neuron projection development"/>
    <property type="evidence" value="ECO:0000250"/>
    <property type="project" value="UniProtKB"/>
</dbReference>
<dbReference type="GO" id="GO:2001137">
    <property type="term" value="P:positive regulation of endocytic recycling"/>
    <property type="evidence" value="ECO:0000250"/>
    <property type="project" value="UniProtKB"/>
</dbReference>
<dbReference type="GO" id="GO:1901741">
    <property type="term" value="P:positive regulation of myoblast fusion"/>
    <property type="evidence" value="ECO:0000250"/>
    <property type="project" value="UniProtKB"/>
</dbReference>
<dbReference type="GO" id="GO:0061512">
    <property type="term" value="P:protein localization to cilium"/>
    <property type="evidence" value="ECO:0000250"/>
    <property type="project" value="UniProtKB"/>
</dbReference>
<dbReference type="CDD" id="cd00052">
    <property type="entry name" value="EH"/>
    <property type="match status" value="1"/>
</dbReference>
<dbReference type="CDD" id="cd09913">
    <property type="entry name" value="EHD"/>
    <property type="match status" value="1"/>
</dbReference>
<dbReference type="FunFam" id="3.40.50.300:FF:000147">
    <property type="entry name" value="EH domain-containing protein 1"/>
    <property type="match status" value="1"/>
</dbReference>
<dbReference type="FunFam" id="1.10.238.10:FF:000038">
    <property type="entry name" value="EH domain-containing protein 3"/>
    <property type="match status" value="1"/>
</dbReference>
<dbReference type="Gene3D" id="1.10.268.20">
    <property type="match status" value="1"/>
</dbReference>
<dbReference type="Gene3D" id="1.10.238.10">
    <property type="entry name" value="EF-hand"/>
    <property type="match status" value="1"/>
</dbReference>
<dbReference type="Gene3D" id="3.40.50.300">
    <property type="entry name" value="P-loop containing nucleotide triphosphate hydrolases"/>
    <property type="match status" value="1"/>
</dbReference>
<dbReference type="InterPro" id="IPR040990">
    <property type="entry name" value="DUF5600"/>
</dbReference>
<dbReference type="InterPro" id="IPR045063">
    <property type="entry name" value="Dynamin_N"/>
</dbReference>
<dbReference type="InterPro" id="IPR011992">
    <property type="entry name" value="EF-hand-dom_pair"/>
</dbReference>
<dbReference type="InterPro" id="IPR018247">
    <property type="entry name" value="EF_Hand_1_Ca_BS"/>
</dbReference>
<dbReference type="InterPro" id="IPR002048">
    <property type="entry name" value="EF_hand_dom"/>
</dbReference>
<dbReference type="InterPro" id="IPR000261">
    <property type="entry name" value="EH_dom"/>
</dbReference>
<dbReference type="InterPro" id="IPR031692">
    <property type="entry name" value="EHD_N"/>
</dbReference>
<dbReference type="InterPro" id="IPR030381">
    <property type="entry name" value="G_DYNAMIN_dom"/>
</dbReference>
<dbReference type="InterPro" id="IPR027417">
    <property type="entry name" value="P-loop_NTPase"/>
</dbReference>
<dbReference type="PANTHER" id="PTHR11216:SF170">
    <property type="entry name" value="DYNAMIN ASSOCIATED PROTEIN 160, ISOFORM D"/>
    <property type="match status" value="1"/>
</dbReference>
<dbReference type="PANTHER" id="PTHR11216">
    <property type="entry name" value="EH DOMAIN"/>
    <property type="match status" value="1"/>
</dbReference>
<dbReference type="Pfam" id="PF18150">
    <property type="entry name" value="DUF5600"/>
    <property type="match status" value="1"/>
</dbReference>
<dbReference type="Pfam" id="PF00350">
    <property type="entry name" value="Dynamin_N"/>
    <property type="match status" value="1"/>
</dbReference>
<dbReference type="Pfam" id="PF12763">
    <property type="entry name" value="EH"/>
    <property type="match status" value="1"/>
</dbReference>
<dbReference type="Pfam" id="PF16880">
    <property type="entry name" value="EHD_N"/>
    <property type="match status" value="1"/>
</dbReference>
<dbReference type="SMART" id="SM00027">
    <property type="entry name" value="EH"/>
    <property type="match status" value="1"/>
</dbReference>
<dbReference type="SUPFAM" id="SSF47473">
    <property type="entry name" value="EF-hand"/>
    <property type="match status" value="1"/>
</dbReference>
<dbReference type="SUPFAM" id="SSF52540">
    <property type="entry name" value="P-loop containing nucleoside triphosphate hydrolases"/>
    <property type="match status" value="1"/>
</dbReference>
<dbReference type="PROSITE" id="PS00018">
    <property type="entry name" value="EF_HAND_1"/>
    <property type="match status" value="1"/>
</dbReference>
<dbReference type="PROSITE" id="PS50222">
    <property type="entry name" value="EF_HAND_2"/>
    <property type="match status" value="1"/>
</dbReference>
<dbReference type="PROSITE" id="PS50031">
    <property type="entry name" value="EH"/>
    <property type="match status" value="1"/>
</dbReference>
<dbReference type="PROSITE" id="PS51718">
    <property type="entry name" value="G_DYNAMIN_2"/>
    <property type="match status" value="1"/>
</dbReference>
<feature type="chain" id="PRO_0000306857" description="EH domain-containing protein 1">
    <location>
        <begin position="1"/>
        <end position="534"/>
    </location>
</feature>
<feature type="domain" description="Dynamin-type G" evidence="8">
    <location>
        <begin position="55"/>
        <end position="286"/>
    </location>
</feature>
<feature type="domain" description="EH" evidence="6">
    <location>
        <begin position="444"/>
        <end position="532"/>
    </location>
</feature>
<feature type="domain" description="EF-hand" evidence="7">
    <location>
        <begin position="476"/>
        <end position="511"/>
    </location>
</feature>
<feature type="region of interest" description="G1 motif" evidence="8">
    <location>
        <begin position="65"/>
        <end position="72"/>
    </location>
</feature>
<feature type="region of interest" description="G2 motif" evidence="8">
    <location>
        <begin position="91"/>
        <end position="92"/>
    </location>
</feature>
<feature type="region of interest" description="G3 motif" evidence="8">
    <location>
        <begin position="153"/>
        <end position="156"/>
    </location>
</feature>
<feature type="region of interest" description="G4 motif" evidence="8">
    <location>
        <begin position="219"/>
        <end position="222"/>
    </location>
</feature>
<feature type="region of interest" description="G5 motif" evidence="8">
    <location>
        <position position="243"/>
    </location>
</feature>
<feature type="coiled-coil region" evidence="5">
    <location>
        <begin position="198"/>
        <end position="227"/>
    </location>
</feature>
<feature type="binding site" evidence="3">
    <location>
        <begin position="65"/>
        <end position="72"/>
    </location>
    <ligand>
        <name>ATP</name>
        <dbReference type="ChEBI" id="CHEBI:30616"/>
    </ligand>
</feature>
<feature type="binding site" evidence="2">
    <location>
        <position position="220"/>
    </location>
    <ligand>
        <name>ATP</name>
        <dbReference type="ChEBI" id="CHEBI:30616"/>
    </ligand>
</feature>
<feature type="binding site" evidence="2">
    <location>
        <position position="258"/>
    </location>
    <ligand>
        <name>ATP</name>
        <dbReference type="ChEBI" id="CHEBI:30616"/>
    </ligand>
</feature>
<feature type="binding site" evidence="7">
    <location>
        <position position="489"/>
    </location>
    <ligand>
        <name>Ca(2+)</name>
        <dbReference type="ChEBI" id="CHEBI:29108"/>
    </ligand>
</feature>
<feature type="binding site" evidence="7">
    <location>
        <position position="491"/>
    </location>
    <ligand>
        <name>Ca(2+)</name>
        <dbReference type="ChEBI" id="CHEBI:29108"/>
    </ligand>
</feature>
<feature type="binding site" evidence="7">
    <location>
        <position position="493"/>
    </location>
    <ligand>
        <name>Ca(2+)</name>
        <dbReference type="ChEBI" id="CHEBI:29108"/>
    </ligand>
</feature>
<feature type="binding site" evidence="7">
    <location>
        <position position="500"/>
    </location>
    <ligand>
        <name>Ca(2+)</name>
        <dbReference type="ChEBI" id="CHEBI:29108"/>
    </ligand>
</feature>
<feature type="modified residue" description="N-acetylmethionine" evidence="3">
    <location>
        <position position="1"/>
    </location>
</feature>
<feature type="modified residue" description="Phosphoserine" evidence="3">
    <location>
        <position position="355"/>
    </location>
</feature>
<feature type="modified residue" description="Phosphoserine" evidence="3">
    <location>
        <position position="456"/>
    </location>
</feature>
<organism>
    <name type="scientific">Pongo abelii</name>
    <name type="common">Sumatran orangutan</name>
    <name type="synonym">Pongo pygmaeus abelii</name>
    <dbReference type="NCBI Taxonomy" id="9601"/>
    <lineage>
        <taxon>Eukaryota</taxon>
        <taxon>Metazoa</taxon>
        <taxon>Chordata</taxon>
        <taxon>Craniata</taxon>
        <taxon>Vertebrata</taxon>
        <taxon>Euteleostomi</taxon>
        <taxon>Mammalia</taxon>
        <taxon>Eutheria</taxon>
        <taxon>Euarchontoglires</taxon>
        <taxon>Primates</taxon>
        <taxon>Haplorrhini</taxon>
        <taxon>Catarrhini</taxon>
        <taxon>Hominidae</taxon>
        <taxon>Pongo</taxon>
    </lineage>
</organism>
<name>EHD1_PONAB</name>
<accession>Q5RBP4</accession>
<gene>
    <name evidence="3" type="primary">EHD1</name>
</gene>
<reference key="1">
    <citation type="submission" date="2004-11" db="EMBL/GenBank/DDBJ databases">
        <authorList>
            <consortium name="The German cDNA consortium"/>
        </authorList>
    </citation>
    <scope>NUCLEOTIDE SEQUENCE [LARGE SCALE MRNA]</scope>
    <source>
        <tissue>Kidney</tissue>
    </source>
</reference>
<proteinExistence type="evidence at transcript level"/>